<organism>
    <name type="scientific">Borrelia hermsii (strain HS1 / DAH)</name>
    <dbReference type="NCBI Taxonomy" id="314723"/>
    <lineage>
        <taxon>Bacteria</taxon>
        <taxon>Pseudomonadati</taxon>
        <taxon>Spirochaetota</taxon>
        <taxon>Spirochaetia</taxon>
        <taxon>Spirochaetales</taxon>
        <taxon>Borreliaceae</taxon>
        <taxon>Borrelia</taxon>
    </lineage>
</organism>
<feature type="chain" id="PRO_1000143081" description="Small ribosomal subunit protein uS15">
    <location>
        <begin position="1"/>
        <end position="88"/>
    </location>
</feature>
<protein>
    <recommendedName>
        <fullName evidence="1">Small ribosomal subunit protein uS15</fullName>
    </recommendedName>
    <alternativeName>
        <fullName evidence="2">30S ribosomal protein S15</fullName>
    </alternativeName>
</protein>
<name>RS15_BORHD</name>
<comment type="function">
    <text evidence="1">One of the primary rRNA binding proteins, it binds directly to 16S rRNA where it helps nucleate assembly of the platform of the 30S subunit by binding and bridging several RNA helices of the 16S rRNA.</text>
</comment>
<comment type="function">
    <text evidence="1">Forms an intersubunit bridge (bridge B4) with the 23S rRNA of the 50S subunit in the ribosome.</text>
</comment>
<comment type="subunit">
    <text evidence="1">Part of the 30S ribosomal subunit. Forms a bridge to the 50S subunit in the 70S ribosome, contacting the 23S rRNA.</text>
</comment>
<comment type="similarity">
    <text evidence="1">Belongs to the universal ribosomal protein uS15 family.</text>
</comment>
<evidence type="ECO:0000255" key="1">
    <source>
        <dbReference type="HAMAP-Rule" id="MF_01343"/>
    </source>
</evidence>
<evidence type="ECO:0000305" key="2"/>
<sequence>MISKEQKQKIITEFGKNPNDTGSVEVQIALITDRIRYLTEHLKSNKKDHSSKRGLLKLVGQRRSLLRYYQKKNLEAYRTLIAKLGLRK</sequence>
<dbReference type="EMBL" id="CP000048">
    <property type="protein sequence ID" value="AAX17301.1"/>
    <property type="molecule type" value="Genomic_DNA"/>
</dbReference>
<dbReference type="RefSeq" id="WP_012422551.1">
    <property type="nucleotide sequence ID" value="NZ_CP073136.1"/>
</dbReference>
<dbReference type="SMR" id="B2S1E8"/>
<dbReference type="GeneID" id="71843637"/>
<dbReference type="KEGG" id="bhr:BH0804"/>
<dbReference type="HOGENOM" id="CLU_148518_0_0_12"/>
<dbReference type="Proteomes" id="UP000008834">
    <property type="component" value="Chromosome"/>
</dbReference>
<dbReference type="GO" id="GO:0022627">
    <property type="term" value="C:cytosolic small ribosomal subunit"/>
    <property type="evidence" value="ECO:0007669"/>
    <property type="project" value="TreeGrafter"/>
</dbReference>
<dbReference type="GO" id="GO:0019843">
    <property type="term" value="F:rRNA binding"/>
    <property type="evidence" value="ECO:0007669"/>
    <property type="project" value="UniProtKB-UniRule"/>
</dbReference>
<dbReference type="GO" id="GO:0003735">
    <property type="term" value="F:structural constituent of ribosome"/>
    <property type="evidence" value="ECO:0007669"/>
    <property type="project" value="InterPro"/>
</dbReference>
<dbReference type="GO" id="GO:0006412">
    <property type="term" value="P:translation"/>
    <property type="evidence" value="ECO:0007669"/>
    <property type="project" value="UniProtKB-UniRule"/>
</dbReference>
<dbReference type="CDD" id="cd00353">
    <property type="entry name" value="Ribosomal_S15p_S13e"/>
    <property type="match status" value="1"/>
</dbReference>
<dbReference type="FunFam" id="1.10.287.10:FF:000002">
    <property type="entry name" value="30S ribosomal protein S15"/>
    <property type="match status" value="1"/>
</dbReference>
<dbReference type="Gene3D" id="6.10.250.3130">
    <property type="match status" value="1"/>
</dbReference>
<dbReference type="Gene3D" id="1.10.287.10">
    <property type="entry name" value="S15/NS1, RNA-binding"/>
    <property type="match status" value="1"/>
</dbReference>
<dbReference type="HAMAP" id="MF_01343_B">
    <property type="entry name" value="Ribosomal_uS15_B"/>
    <property type="match status" value="1"/>
</dbReference>
<dbReference type="InterPro" id="IPR000589">
    <property type="entry name" value="Ribosomal_uS15"/>
</dbReference>
<dbReference type="InterPro" id="IPR005290">
    <property type="entry name" value="Ribosomal_uS15_bac-type"/>
</dbReference>
<dbReference type="InterPro" id="IPR009068">
    <property type="entry name" value="uS15_NS1_RNA-bd_sf"/>
</dbReference>
<dbReference type="NCBIfam" id="TIGR00952">
    <property type="entry name" value="S15_bact"/>
    <property type="match status" value="1"/>
</dbReference>
<dbReference type="PANTHER" id="PTHR23321">
    <property type="entry name" value="RIBOSOMAL PROTEIN S15, BACTERIAL AND ORGANELLAR"/>
    <property type="match status" value="1"/>
</dbReference>
<dbReference type="PANTHER" id="PTHR23321:SF26">
    <property type="entry name" value="SMALL RIBOSOMAL SUBUNIT PROTEIN US15M"/>
    <property type="match status" value="1"/>
</dbReference>
<dbReference type="Pfam" id="PF00312">
    <property type="entry name" value="Ribosomal_S15"/>
    <property type="match status" value="1"/>
</dbReference>
<dbReference type="SMART" id="SM01387">
    <property type="entry name" value="Ribosomal_S15"/>
    <property type="match status" value="1"/>
</dbReference>
<dbReference type="SUPFAM" id="SSF47060">
    <property type="entry name" value="S15/NS1 RNA-binding domain"/>
    <property type="match status" value="1"/>
</dbReference>
<dbReference type="PROSITE" id="PS00362">
    <property type="entry name" value="RIBOSOMAL_S15"/>
    <property type="match status" value="1"/>
</dbReference>
<gene>
    <name evidence="1" type="primary">rpsO</name>
    <name type="ordered locus">BH0804</name>
</gene>
<proteinExistence type="inferred from homology"/>
<reference key="1">
    <citation type="submission" date="2004-12" db="EMBL/GenBank/DDBJ databases">
        <title>The genome sequence of Borrelia hermsii and Borrelia turicatae: comparative analysis of two agents of endemic N. America relapsing fever.</title>
        <authorList>
            <person name="Porcella S.F."/>
            <person name="Raffel S.J."/>
            <person name="Schrumpf M.E."/>
            <person name="Montgomery B."/>
            <person name="Smith T."/>
            <person name="Schwan T.G."/>
        </authorList>
    </citation>
    <scope>NUCLEOTIDE SEQUENCE [LARGE SCALE GENOMIC DNA]</scope>
    <source>
        <strain>HS1 / DAH</strain>
    </source>
</reference>
<accession>B2S1E8</accession>
<keyword id="KW-0687">Ribonucleoprotein</keyword>
<keyword id="KW-0689">Ribosomal protein</keyword>
<keyword id="KW-0694">RNA-binding</keyword>
<keyword id="KW-0699">rRNA-binding</keyword>